<feature type="chain" id="PRO_0000327510" description="Elongator complex protein 3">
    <location>
        <begin position="1"/>
        <end position="559"/>
    </location>
</feature>
<feature type="domain" description="Radical SAM core" evidence="6">
    <location>
        <begin position="94"/>
        <end position="384"/>
    </location>
</feature>
<feature type="domain" description="N-acetyltransferase" evidence="5">
    <location>
        <begin position="408"/>
        <end position="559"/>
    </location>
</feature>
<feature type="binding site" evidence="3">
    <location>
        <position position="111"/>
    </location>
    <ligand>
        <name>[4Fe-4S] cluster</name>
        <dbReference type="ChEBI" id="CHEBI:49883"/>
        <note>4Fe-4S-S-AdoMet</note>
    </ligand>
</feature>
<feature type="binding site" evidence="3">
    <location>
        <position position="121"/>
    </location>
    <ligand>
        <name>[4Fe-4S] cluster</name>
        <dbReference type="ChEBI" id="CHEBI:49883"/>
        <note>4Fe-4S-S-AdoMet</note>
    </ligand>
</feature>
<feature type="binding site" evidence="3">
    <location>
        <position position="124"/>
    </location>
    <ligand>
        <name>[4Fe-4S] cluster</name>
        <dbReference type="ChEBI" id="CHEBI:49883"/>
        <note>4Fe-4S-S-AdoMet</note>
    </ligand>
</feature>
<feature type="binding site" evidence="1">
    <location>
        <position position="176"/>
    </location>
    <ligand>
        <name>acetyl-CoA</name>
        <dbReference type="ChEBI" id="CHEBI:57288"/>
    </ligand>
</feature>
<feature type="binding site" evidence="1">
    <location>
        <begin position="486"/>
        <end position="489"/>
    </location>
    <ligand>
        <name>acetyl-CoA</name>
        <dbReference type="ChEBI" id="CHEBI:57288"/>
    </ligand>
</feature>
<feature type="binding site" evidence="1">
    <location>
        <begin position="509"/>
        <end position="511"/>
    </location>
    <ligand>
        <name>acetyl-CoA</name>
        <dbReference type="ChEBI" id="CHEBI:57288"/>
    </ligand>
</feature>
<feature type="binding site" evidence="1">
    <location>
        <position position="542"/>
    </location>
    <ligand>
        <name>acetyl-CoA</name>
        <dbReference type="ChEBI" id="CHEBI:57288"/>
    </ligand>
</feature>
<evidence type="ECO:0000250" key="1">
    <source>
        <dbReference type="UniProtKB" id="A0A1C7D1B7"/>
    </source>
</evidence>
<evidence type="ECO:0000250" key="2">
    <source>
        <dbReference type="UniProtKB" id="D5VRB9"/>
    </source>
</evidence>
<evidence type="ECO:0000250" key="3">
    <source>
        <dbReference type="UniProtKB" id="Q02908"/>
    </source>
</evidence>
<evidence type="ECO:0000250" key="4">
    <source>
        <dbReference type="UniProtKB" id="Q9H9T3"/>
    </source>
</evidence>
<evidence type="ECO:0000255" key="5">
    <source>
        <dbReference type="PROSITE-ProRule" id="PRU00532"/>
    </source>
</evidence>
<evidence type="ECO:0000255" key="6">
    <source>
        <dbReference type="PROSITE-ProRule" id="PRU01266"/>
    </source>
</evidence>
<evidence type="ECO:0000305" key="7"/>
<comment type="function">
    <text evidence="2 4">Catalytic tRNA acetyltransferase subunit of the elongator complex which is required for multiple tRNA modifications, including mcm5U (5-methoxycarbonylmethyl uridine), mcm5s2U (5-methoxycarbonylmethyl-2-thiouridine), and ncm5U (5-carbamoylmethyl uridine) (By similarity). In the elongator complex, acts as a tRNA uridine(34) acetyltransferase by mediating formation of carboxymethyluridine in the wobble base at position 34 in tRNAs (By similarity).</text>
</comment>
<comment type="catalytic activity">
    <reaction evidence="2">
        <text>uridine(34) in tRNA + acetyl-CoA + S-adenosyl-L-methionine + H2O = 5-(carboxymethyl)uridine(34) in tRNA + 5'-deoxyadenosine + L-methionine + CoA + 2 H(+)</text>
        <dbReference type="Rhea" id="RHEA:61020"/>
        <dbReference type="Rhea" id="RHEA-COMP:10407"/>
        <dbReference type="Rhea" id="RHEA-COMP:11727"/>
        <dbReference type="ChEBI" id="CHEBI:15377"/>
        <dbReference type="ChEBI" id="CHEBI:15378"/>
        <dbReference type="ChEBI" id="CHEBI:17319"/>
        <dbReference type="ChEBI" id="CHEBI:57287"/>
        <dbReference type="ChEBI" id="CHEBI:57288"/>
        <dbReference type="ChEBI" id="CHEBI:57844"/>
        <dbReference type="ChEBI" id="CHEBI:59789"/>
        <dbReference type="ChEBI" id="CHEBI:65315"/>
        <dbReference type="ChEBI" id="CHEBI:74882"/>
        <dbReference type="EC" id="2.3.1.311"/>
    </reaction>
    <physiologicalReaction direction="left-to-right" evidence="2">
        <dbReference type="Rhea" id="RHEA:61021"/>
    </physiologicalReaction>
</comment>
<comment type="cofactor">
    <cofactor evidence="3">
        <name>[4Fe-4S] cluster</name>
        <dbReference type="ChEBI" id="CHEBI:49883"/>
    </cofactor>
    <text evidence="3">Binds 1 [4Fe-4S] cluster. The cluster is coordinated with 3 cysteines and an exchangeable S-adenosyl-L-methionine.</text>
</comment>
<comment type="pathway">
    <text evidence="4">tRNA modification; 5-methoxycarbonylmethyl-2-thiouridine-tRNA biosynthesis.</text>
</comment>
<comment type="subunit">
    <text evidence="4">Component of the elongator complex.</text>
</comment>
<comment type="similarity">
    <text evidence="7">Belongs to the ELP3 family.</text>
</comment>
<comment type="caution">
    <text evidence="4">The elongator complex was originally thought to play a role in transcription elongation. However, it is no longer thought to play a direct role in this process and its primary function is thought to be in tRNA modification.</text>
</comment>
<sequence>MSLMNDPRPVSKKAGAKPVYGKNTPQFTKTVGEIVNALINAYKEGKKVNLLKIKTELAAKNSLSDQPKSVDIISAIPESYKNTLLPLLKAKPVRTASGIAVVAVMCKPHRCPHLAMTGNICVYCPGGPDSDFEYSTQSYTGYEPTSMRAIRARYNPFLQTRHRIDQLKRLGHNVEKVEFIIMGGTFMSLPSDYRDYFIRNLHDALSGHTSNNVAEAVKYSEQSNVKCVGITIETRPDHCLKLHLSNMLTYGCTRLEIGVQSVFEDIARDTNRGHTVRAVLESFQLAKDSGFKVVAHMMPDLPNMGMERDIYGFMEFFENPAFRADGLKIYPTLVIRGTGLYELWKTGTYKNYSPDSLVDLIAKVLALVPPWTRIYRIQRDIPMPLVTSGVEYGNLRELCLARMKDFGTKCRDVRTREVGIQEVHHKIKPDQVELIRRDYVANGGWETFLSFEDPKQDILIGLLRLRKCSETSFRPELKENCSIVRELHVYGSVVGIHNRDPTKFQHQGYGTLLMEEAERIAREEHGSIKLAVIAGVGTRHYYRKLGYELDGVYVSKYLG</sequence>
<accession>Q1ZXC6</accession>
<proteinExistence type="inferred from homology"/>
<organism>
    <name type="scientific">Dictyostelium discoideum</name>
    <name type="common">Social amoeba</name>
    <dbReference type="NCBI Taxonomy" id="44689"/>
    <lineage>
        <taxon>Eukaryota</taxon>
        <taxon>Amoebozoa</taxon>
        <taxon>Evosea</taxon>
        <taxon>Eumycetozoa</taxon>
        <taxon>Dictyostelia</taxon>
        <taxon>Dictyosteliales</taxon>
        <taxon>Dictyosteliaceae</taxon>
        <taxon>Dictyostelium</taxon>
    </lineage>
</organism>
<protein>
    <recommendedName>
        <fullName evidence="7">Elongator complex protein 3</fullName>
        <ecNumber evidence="2">2.3.1.311</ecNumber>
    </recommendedName>
    <alternativeName>
        <fullName evidence="7">tRNA uridine(34) acetyltransferase</fullName>
    </alternativeName>
</protein>
<keyword id="KW-0004">4Fe-4S</keyword>
<keyword id="KW-0012">Acyltransferase</keyword>
<keyword id="KW-0408">Iron</keyword>
<keyword id="KW-0411">Iron-sulfur</keyword>
<keyword id="KW-0479">Metal-binding</keyword>
<keyword id="KW-1185">Reference proteome</keyword>
<keyword id="KW-0694">RNA-binding</keyword>
<keyword id="KW-0949">S-adenosyl-L-methionine</keyword>
<keyword id="KW-0808">Transferase</keyword>
<keyword id="KW-0819">tRNA processing</keyword>
<keyword id="KW-0820">tRNA-binding</keyword>
<dbReference type="EC" id="2.3.1.311" evidence="2"/>
<dbReference type="EMBL" id="AAFI02000153">
    <property type="protein sequence ID" value="EAS66831.1"/>
    <property type="molecule type" value="Genomic_DNA"/>
</dbReference>
<dbReference type="RefSeq" id="XP_001134514.1">
    <property type="nucleotide sequence ID" value="XM_001134514.1"/>
</dbReference>
<dbReference type="SMR" id="Q1ZXC6"/>
<dbReference type="FunCoup" id="Q1ZXC6">
    <property type="interactions" value="933"/>
</dbReference>
<dbReference type="STRING" id="44689.Q1ZXC6"/>
<dbReference type="PaxDb" id="44689-DDB0231756"/>
<dbReference type="EnsemblProtists" id="EAS66831">
    <property type="protein sequence ID" value="EAS66831"/>
    <property type="gene ID" value="DDB_G0290103"/>
</dbReference>
<dbReference type="GeneID" id="8627480"/>
<dbReference type="KEGG" id="ddi:DDB_G0290103"/>
<dbReference type="dictyBase" id="DDB_G0290103">
    <property type="gene designation" value="elp3"/>
</dbReference>
<dbReference type="VEuPathDB" id="AmoebaDB:DDB_G0290103"/>
<dbReference type="eggNOG" id="KOG2535">
    <property type="taxonomic scope" value="Eukaryota"/>
</dbReference>
<dbReference type="HOGENOM" id="CLU_025983_2_1_1"/>
<dbReference type="InParanoid" id="Q1ZXC6"/>
<dbReference type="OMA" id="TFETRPD"/>
<dbReference type="PhylomeDB" id="Q1ZXC6"/>
<dbReference type="UniPathway" id="UPA00988"/>
<dbReference type="PRO" id="PR:Q1ZXC6"/>
<dbReference type="Proteomes" id="UP000002195">
    <property type="component" value="Chromosome 5"/>
</dbReference>
<dbReference type="GO" id="GO:0005737">
    <property type="term" value="C:cytoplasm"/>
    <property type="evidence" value="ECO:0000318"/>
    <property type="project" value="GO_Central"/>
</dbReference>
<dbReference type="GO" id="GO:0033588">
    <property type="term" value="C:elongator holoenzyme complex"/>
    <property type="evidence" value="ECO:0000314"/>
    <property type="project" value="dictyBase"/>
</dbReference>
<dbReference type="GO" id="GO:0005634">
    <property type="term" value="C:nucleus"/>
    <property type="evidence" value="ECO:0000318"/>
    <property type="project" value="GO_Central"/>
</dbReference>
<dbReference type="GO" id="GO:0051539">
    <property type="term" value="F:4 iron, 4 sulfur cluster binding"/>
    <property type="evidence" value="ECO:0007669"/>
    <property type="project" value="UniProtKB-KW"/>
</dbReference>
<dbReference type="GO" id="GO:0046872">
    <property type="term" value="F:metal ion binding"/>
    <property type="evidence" value="ECO:0007669"/>
    <property type="project" value="UniProtKB-KW"/>
</dbReference>
<dbReference type="GO" id="GO:0000049">
    <property type="term" value="F:tRNA binding"/>
    <property type="evidence" value="ECO:0007669"/>
    <property type="project" value="UniProtKB-KW"/>
</dbReference>
<dbReference type="GO" id="GO:0106261">
    <property type="term" value="F:tRNA uridine(34) acetyltransferase activity"/>
    <property type="evidence" value="ECO:0000314"/>
    <property type="project" value="dictyBase"/>
</dbReference>
<dbReference type="GO" id="GO:0006357">
    <property type="term" value="P:regulation of transcription by RNA polymerase II"/>
    <property type="evidence" value="ECO:0000250"/>
    <property type="project" value="dictyBase"/>
</dbReference>
<dbReference type="GO" id="GO:0002926">
    <property type="term" value="P:tRNA wobble base 5-methoxycarbonylmethyl-2-thiouridinylation"/>
    <property type="evidence" value="ECO:0000318"/>
    <property type="project" value="GO_Central"/>
</dbReference>
<dbReference type="GO" id="GO:0002098">
    <property type="term" value="P:tRNA wobble uridine modification"/>
    <property type="evidence" value="ECO:0000315"/>
    <property type="project" value="dictyBase"/>
</dbReference>
<dbReference type="CDD" id="cd01335">
    <property type="entry name" value="Radical_SAM"/>
    <property type="match status" value="1"/>
</dbReference>
<dbReference type="FunFam" id="3.40.630.30:FF:000003">
    <property type="entry name" value="Elongator complex protein 3"/>
    <property type="match status" value="1"/>
</dbReference>
<dbReference type="Gene3D" id="3.40.630.30">
    <property type="match status" value="1"/>
</dbReference>
<dbReference type="InterPro" id="IPR016181">
    <property type="entry name" value="Acyl_CoA_acyltransferase"/>
</dbReference>
<dbReference type="InterPro" id="IPR039661">
    <property type="entry name" value="ELP3"/>
</dbReference>
<dbReference type="InterPro" id="IPR034687">
    <property type="entry name" value="ELP3-like"/>
</dbReference>
<dbReference type="InterPro" id="IPR056591">
    <property type="entry name" value="ELP3-like_N"/>
</dbReference>
<dbReference type="InterPro" id="IPR006638">
    <property type="entry name" value="Elp3/MiaA/NifB-like_rSAM"/>
</dbReference>
<dbReference type="InterPro" id="IPR000182">
    <property type="entry name" value="GNAT_dom"/>
</dbReference>
<dbReference type="InterPro" id="IPR032432">
    <property type="entry name" value="Radical_SAM_C"/>
</dbReference>
<dbReference type="InterPro" id="IPR007197">
    <property type="entry name" value="rSAM"/>
</dbReference>
<dbReference type="NCBIfam" id="TIGR01211">
    <property type="entry name" value="ELP3"/>
    <property type="match status" value="1"/>
</dbReference>
<dbReference type="PANTHER" id="PTHR11135:SF0">
    <property type="entry name" value="ELONGATOR COMPLEX PROTEIN 3"/>
    <property type="match status" value="1"/>
</dbReference>
<dbReference type="PANTHER" id="PTHR11135">
    <property type="entry name" value="HISTONE ACETYLTRANSFERASE-RELATED"/>
    <property type="match status" value="1"/>
</dbReference>
<dbReference type="Pfam" id="PF00583">
    <property type="entry name" value="Acetyltransf_1"/>
    <property type="match status" value="1"/>
</dbReference>
<dbReference type="Pfam" id="PF23613">
    <property type="entry name" value="ELP3_N"/>
    <property type="match status" value="1"/>
</dbReference>
<dbReference type="Pfam" id="PF04055">
    <property type="entry name" value="Radical_SAM"/>
    <property type="match status" value="1"/>
</dbReference>
<dbReference type="Pfam" id="PF16199">
    <property type="entry name" value="Radical_SAM_C"/>
    <property type="match status" value="1"/>
</dbReference>
<dbReference type="PIRSF" id="PIRSF005669">
    <property type="entry name" value="Hist_AcTrfase_ELP3"/>
    <property type="match status" value="1"/>
</dbReference>
<dbReference type="SFLD" id="SFLDG01086">
    <property type="entry name" value="elongater_protein-like"/>
    <property type="match status" value="1"/>
</dbReference>
<dbReference type="SFLD" id="SFLDF00344">
    <property type="entry name" value="ELP3-like"/>
    <property type="match status" value="1"/>
</dbReference>
<dbReference type="SMART" id="SM00729">
    <property type="entry name" value="Elp3"/>
    <property type="match status" value="1"/>
</dbReference>
<dbReference type="SUPFAM" id="SSF55729">
    <property type="entry name" value="Acyl-CoA N-acyltransferases (Nat)"/>
    <property type="match status" value="1"/>
</dbReference>
<dbReference type="SUPFAM" id="SSF102114">
    <property type="entry name" value="Radical SAM enzymes"/>
    <property type="match status" value="1"/>
</dbReference>
<dbReference type="PROSITE" id="PS51186">
    <property type="entry name" value="GNAT"/>
    <property type="match status" value="1"/>
</dbReference>
<dbReference type="PROSITE" id="PS51918">
    <property type="entry name" value="RADICAL_SAM"/>
    <property type="match status" value="1"/>
</dbReference>
<gene>
    <name type="primary">elp3</name>
    <name type="ORF">DDB_G0290103</name>
</gene>
<reference key="1">
    <citation type="journal article" date="2005" name="Nature">
        <title>The genome of the social amoeba Dictyostelium discoideum.</title>
        <authorList>
            <person name="Eichinger L."/>
            <person name="Pachebat J.A."/>
            <person name="Gloeckner G."/>
            <person name="Rajandream M.A."/>
            <person name="Sucgang R."/>
            <person name="Berriman M."/>
            <person name="Song J."/>
            <person name="Olsen R."/>
            <person name="Szafranski K."/>
            <person name="Xu Q."/>
            <person name="Tunggal B."/>
            <person name="Kummerfeld S."/>
            <person name="Madera M."/>
            <person name="Konfortov B.A."/>
            <person name="Rivero F."/>
            <person name="Bankier A.T."/>
            <person name="Lehmann R."/>
            <person name="Hamlin N."/>
            <person name="Davies R."/>
            <person name="Gaudet P."/>
            <person name="Fey P."/>
            <person name="Pilcher K."/>
            <person name="Chen G."/>
            <person name="Saunders D."/>
            <person name="Sodergren E.J."/>
            <person name="Davis P."/>
            <person name="Kerhornou A."/>
            <person name="Nie X."/>
            <person name="Hall N."/>
            <person name="Anjard C."/>
            <person name="Hemphill L."/>
            <person name="Bason N."/>
            <person name="Farbrother P."/>
            <person name="Desany B."/>
            <person name="Just E."/>
            <person name="Morio T."/>
            <person name="Rost R."/>
            <person name="Churcher C.M."/>
            <person name="Cooper J."/>
            <person name="Haydock S."/>
            <person name="van Driessche N."/>
            <person name="Cronin A."/>
            <person name="Goodhead I."/>
            <person name="Muzny D.M."/>
            <person name="Mourier T."/>
            <person name="Pain A."/>
            <person name="Lu M."/>
            <person name="Harper D."/>
            <person name="Lindsay R."/>
            <person name="Hauser H."/>
            <person name="James K.D."/>
            <person name="Quiles M."/>
            <person name="Madan Babu M."/>
            <person name="Saito T."/>
            <person name="Buchrieser C."/>
            <person name="Wardroper A."/>
            <person name="Felder M."/>
            <person name="Thangavelu M."/>
            <person name="Johnson D."/>
            <person name="Knights A."/>
            <person name="Loulseged H."/>
            <person name="Mungall K.L."/>
            <person name="Oliver K."/>
            <person name="Price C."/>
            <person name="Quail M.A."/>
            <person name="Urushihara H."/>
            <person name="Hernandez J."/>
            <person name="Rabbinowitsch E."/>
            <person name="Steffen D."/>
            <person name="Sanders M."/>
            <person name="Ma J."/>
            <person name="Kohara Y."/>
            <person name="Sharp S."/>
            <person name="Simmonds M.N."/>
            <person name="Spiegler S."/>
            <person name="Tivey A."/>
            <person name="Sugano S."/>
            <person name="White B."/>
            <person name="Walker D."/>
            <person name="Woodward J.R."/>
            <person name="Winckler T."/>
            <person name="Tanaka Y."/>
            <person name="Shaulsky G."/>
            <person name="Schleicher M."/>
            <person name="Weinstock G.M."/>
            <person name="Rosenthal A."/>
            <person name="Cox E.C."/>
            <person name="Chisholm R.L."/>
            <person name="Gibbs R.A."/>
            <person name="Loomis W.F."/>
            <person name="Platzer M."/>
            <person name="Kay R.R."/>
            <person name="Williams J.G."/>
            <person name="Dear P.H."/>
            <person name="Noegel A.A."/>
            <person name="Barrell B.G."/>
            <person name="Kuspa A."/>
        </authorList>
    </citation>
    <scope>NUCLEOTIDE SEQUENCE [LARGE SCALE GENOMIC DNA]</scope>
    <source>
        <strain>AX4</strain>
    </source>
</reference>
<name>ELP3_DICDI</name>